<proteinExistence type="inferred from homology"/>
<comment type="similarity">
    <text evidence="3">Belongs to the aerolysin family.</text>
</comment>
<evidence type="ECO:0000255" key="1"/>
<evidence type="ECO:0000256" key="2">
    <source>
        <dbReference type="SAM" id="MobiDB-lite"/>
    </source>
</evidence>
<evidence type="ECO:0000305" key="3"/>
<protein>
    <recommendedName>
        <fullName>Uncharacterized leukocidin-like protein 2</fullName>
    </recommendedName>
</protein>
<name>LUKL2_STAA3</name>
<organism>
    <name type="scientific">Staphylococcus aureus (strain USA300)</name>
    <dbReference type="NCBI Taxonomy" id="367830"/>
    <lineage>
        <taxon>Bacteria</taxon>
        <taxon>Bacillati</taxon>
        <taxon>Bacillota</taxon>
        <taxon>Bacilli</taxon>
        <taxon>Bacillales</taxon>
        <taxon>Staphylococcaceae</taxon>
        <taxon>Staphylococcus</taxon>
    </lineage>
</organism>
<dbReference type="EMBL" id="CP000255">
    <property type="protein sequence ID" value="ABD22526.1"/>
    <property type="molecule type" value="Genomic_DNA"/>
</dbReference>
<dbReference type="SMR" id="Q2FFA2"/>
<dbReference type="KEGG" id="saa:SAUSA300_1975"/>
<dbReference type="HOGENOM" id="CLU_865755_0_0_9"/>
<dbReference type="OMA" id="HWSVVAN"/>
<dbReference type="Proteomes" id="UP000001939">
    <property type="component" value="Chromosome"/>
</dbReference>
<dbReference type="GO" id="GO:0005576">
    <property type="term" value="C:extracellular region"/>
    <property type="evidence" value="ECO:0007669"/>
    <property type="project" value="InterPro"/>
</dbReference>
<dbReference type="GO" id="GO:0051715">
    <property type="term" value="P:cytolysis in another organism"/>
    <property type="evidence" value="ECO:0007669"/>
    <property type="project" value="InterPro"/>
</dbReference>
<dbReference type="Gene3D" id="2.70.240.10">
    <property type="entry name" value="Leukocidin/porin MspA"/>
    <property type="match status" value="1"/>
</dbReference>
<dbReference type="InterPro" id="IPR003963">
    <property type="entry name" value="Bi-component_toxin_staph"/>
</dbReference>
<dbReference type="InterPro" id="IPR016183">
    <property type="entry name" value="Leukocidin/Hemolysin_toxin"/>
</dbReference>
<dbReference type="InterPro" id="IPR036435">
    <property type="entry name" value="Leukocidin/porin_MspA_sf"/>
</dbReference>
<dbReference type="Pfam" id="PF07968">
    <property type="entry name" value="Leukocidin"/>
    <property type="match status" value="1"/>
</dbReference>
<dbReference type="PRINTS" id="PR01468">
    <property type="entry name" value="BICOMPNTOXIN"/>
</dbReference>
<dbReference type="SUPFAM" id="SSF56959">
    <property type="entry name" value="Leukocidin-like"/>
    <property type="match status" value="1"/>
</dbReference>
<sequence length="351" mass="40434">MKNKKRVLIASSLSCAILLLSAATTQANSAHKDSQDQNKKEHVDKSQQKDKRNVTNKDKNSTAPDDIGKNGKITKRTETVYDEKTNILQNLQFDFIDDPTYDKNVLLVKKQGSIHSNLKFESHKEEKNSNWLKYPSEYHVDFQVKRNRKTEILDQLPKNKISTAKVDSTFSYSSGGKFDSTKGIGRTSSNSYSKTISYNQQNYDTIASGKNNNWHVHWSVIANDLKYGGEVKNRNDELLFYRNTRIATVENPELSFASKYRYPALVRSGFNPEFLTYLSNEKSNEKTQFEVTYTRNQDILKNRPGIHYAPPILEKNKDGQRLIVTYEVDWKNKTVKVVDKYSDDNKPYKEG</sequence>
<keyword id="KW-0732">Signal</keyword>
<gene>
    <name type="ordered locus">SAUSA300_1975</name>
</gene>
<reference key="1">
    <citation type="journal article" date="2006" name="Lancet">
        <title>Complete genome sequence of USA300, an epidemic clone of community-acquired meticillin-resistant Staphylococcus aureus.</title>
        <authorList>
            <person name="Diep B.A."/>
            <person name="Gill S.R."/>
            <person name="Chang R.F."/>
            <person name="Phan T.H."/>
            <person name="Chen J.H."/>
            <person name="Davidson M.G."/>
            <person name="Lin F."/>
            <person name="Lin J."/>
            <person name="Carleton H.A."/>
            <person name="Mongodin E.F."/>
            <person name="Sensabaugh G.F."/>
            <person name="Perdreau-Remington F."/>
        </authorList>
    </citation>
    <scope>NUCLEOTIDE SEQUENCE [LARGE SCALE GENOMIC DNA]</scope>
    <source>
        <strain>USA300</strain>
    </source>
</reference>
<accession>Q2FFA2</accession>
<feature type="signal peptide" evidence="1">
    <location>
        <begin position="1"/>
        <end position="27"/>
    </location>
</feature>
<feature type="chain" id="PRO_0000298647" description="Uncharacterized leukocidin-like protein 2">
    <location>
        <begin position="28"/>
        <end position="351"/>
    </location>
</feature>
<feature type="region of interest" description="Disordered" evidence="2">
    <location>
        <begin position="27"/>
        <end position="71"/>
    </location>
</feature>
<feature type="compositionally biased region" description="Basic and acidic residues" evidence="2">
    <location>
        <begin position="30"/>
        <end position="60"/>
    </location>
</feature>